<organism>
    <name type="scientific">Streptococcus pneumoniae (strain CGSP14)</name>
    <dbReference type="NCBI Taxonomy" id="516950"/>
    <lineage>
        <taxon>Bacteria</taxon>
        <taxon>Bacillati</taxon>
        <taxon>Bacillota</taxon>
        <taxon>Bacilli</taxon>
        <taxon>Lactobacillales</taxon>
        <taxon>Streptococcaceae</taxon>
        <taxon>Streptococcus</taxon>
    </lineage>
</organism>
<protein>
    <recommendedName>
        <fullName evidence="1">Holliday junction resolvase RecU</fullName>
        <ecNumber evidence="1">3.1.21.10</ecNumber>
    </recommendedName>
    <alternativeName>
        <fullName evidence="1">Recombination protein U homolog</fullName>
    </alternativeName>
</protein>
<accession>B2ILR2</accession>
<dbReference type="EC" id="3.1.21.10" evidence="1"/>
<dbReference type="EMBL" id="CP001033">
    <property type="protein sequence ID" value="ACB89619.1"/>
    <property type="molecule type" value="Genomic_DNA"/>
</dbReference>
<dbReference type="RefSeq" id="WP_000248774.1">
    <property type="nucleotide sequence ID" value="NC_010582.1"/>
</dbReference>
<dbReference type="SMR" id="B2ILR2"/>
<dbReference type="GeneID" id="45217784"/>
<dbReference type="KEGG" id="spw:SPCG_0366"/>
<dbReference type="HOGENOM" id="CLU_096340_0_0_9"/>
<dbReference type="GO" id="GO:0005737">
    <property type="term" value="C:cytoplasm"/>
    <property type="evidence" value="ECO:0007669"/>
    <property type="project" value="UniProtKB-SubCell"/>
</dbReference>
<dbReference type="GO" id="GO:0004519">
    <property type="term" value="F:endonuclease activity"/>
    <property type="evidence" value="ECO:0007669"/>
    <property type="project" value="UniProtKB-UniRule"/>
</dbReference>
<dbReference type="GO" id="GO:0000287">
    <property type="term" value="F:magnesium ion binding"/>
    <property type="evidence" value="ECO:0007669"/>
    <property type="project" value="UniProtKB-UniRule"/>
</dbReference>
<dbReference type="GO" id="GO:0003676">
    <property type="term" value="F:nucleic acid binding"/>
    <property type="evidence" value="ECO:0007669"/>
    <property type="project" value="InterPro"/>
</dbReference>
<dbReference type="GO" id="GO:0007059">
    <property type="term" value="P:chromosome segregation"/>
    <property type="evidence" value="ECO:0007669"/>
    <property type="project" value="UniProtKB-UniRule"/>
</dbReference>
<dbReference type="GO" id="GO:0006310">
    <property type="term" value="P:DNA recombination"/>
    <property type="evidence" value="ECO:0007669"/>
    <property type="project" value="UniProtKB-UniRule"/>
</dbReference>
<dbReference type="GO" id="GO:0006281">
    <property type="term" value="P:DNA repair"/>
    <property type="evidence" value="ECO:0007669"/>
    <property type="project" value="UniProtKB-UniRule"/>
</dbReference>
<dbReference type="CDD" id="cd22354">
    <property type="entry name" value="RecU-like"/>
    <property type="match status" value="1"/>
</dbReference>
<dbReference type="Gene3D" id="3.40.1350.10">
    <property type="match status" value="1"/>
</dbReference>
<dbReference type="HAMAP" id="MF_00130">
    <property type="entry name" value="RecU"/>
    <property type="match status" value="1"/>
</dbReference>
<dbReference type="InterPro" id="IPR004612">
    <property type="entry name" value="Resolv_RecU"/>
</dbReference>
<dbReference type="InterPro" id="IPR011335">
    <property type="entry name" value="Restrct_endonuc-II-like"/>
</dbReference>
<dbReference type="InterPro" id="IPR011856">
    <property type="entry name" value="tRNA_endonuc-like_dom_sf"/>
</dbReference>
<dbReference type="NCBIfam" id="NF002580">
    <property type="entry name" value="PRK02234.1-1"/>
    <property type="match status" value="1"/>
</dbReference>
<dbReference type="NCBIfam" id="NF002584">
    <property type="entry name" value="PRK02234.1-5"/>
    <property type="match status" value="1"/>
</dbReference>
<dbReference type="NCBIfam" id="TIGR00648">
    <property type="entry name" value="recU"/>
    <property type="match status" value="1"/>
</dbReference>
<dbReference type="Pfam" id="PF03838">
    <property type="entry name" value="RecU"/>
    <property type="match status" value="1"/>
</dbReference>
<dbReference type="PIRSF" id="PIRSF037785">
    <property type="entry name" value="RecU"/>
    <property type="match status" value="1"/>
</dbReference>
<dbReference type="SUPFAM" id="SSF52980">
    <property type="entry name" value="Restriction endonuclease-like"/>
    <property type="match status" value="1"/>
</dbReference>
<evidence type="ECO:0000255" key="1">
    <source>
        <dbReference type="HAMAP-Rule" id="MF_00130"/>
    </source>
</evidence>
<evidence type="ECO:0000256" key="2">
    <source>
        <dbReference type="SAM" id="MobiDB-lite"/>
    </source>
</evidence>
<feature type="chain" id="PRO_1000095682" description="Holliday junction resolvase RecU">
    <location>
        <begin position="1"/>
        <end position="198"/>
    </location>
</feature>
<feature type="region of interest" description="Disordered" evidence="2">
    <location>
        <begin position="1"/>
        <end position="21"/>
    </location>
</feature>
<feature type="compositionally biased region" description="Polar residues" evidence="2">
    <location>
        <begin position="11"/>
        <end position="21"/>
    </location>
</feature>
<feature type="binding site" evidence="1">
    <location>
        <position position="81"/>
    </location>
    <ligand>
        <name>Mg(2+)</name>
        <dbReference type="ChEBI" id="CHEBI:18420"/>
    </ligand>
</feature>
<feature type="binding site" evidence="1">
    <location>
        <position position="83"/>
    </location>
    <ligand>
        <name>Mg(2+)</name>
        <dbReference type="ChEBI" id="CHEBI:18420"/>
    </ligand>
</feature>
<feature type="binding site" evidence="1">
    <location>
        <position position="96"/>
    </location>
    <ligand>
        <name>Mg(2+)</name>
        <dbReference type="ChEBI" id="CHEBI:18420"/>
    </ligand>
</feature>
<feature type="binding site" evidence="1">
    <location>
        <position position="115"/>
    </location>
    <ligand>
        <name>Mg(2+)</name>
        <dbReference type="ChEBI" id="CHEBI:18420"/>
    </ligand>
</feature>
<feature type="site" description="Transition state stabilizer" evidence="1">
    <location>
        <position position="98"/>
    </location>
</feature>
<proteinExistence type="inferred from homology"/>
<name>RECU_STRPS</name>
<sequence length="198" mass="23069">MVNYPHKLSSQKRQPSLSQPKNFANRGMSFEKMINATNDYYLSQGLAVIHKKPTPIQIVRVDYPQRSRAKIVEAYFRQASTTDYSGVYNGYYIDFEAKETKQKRAIPMKNFHPHQIQHMEQVLAQQGICFVLLHFSSQQETYLLPAFDLIRFYHQDKGQKSMPLGYIREYGYEIKAGAFPQIPYLNVIKEHLLGGKTR</sequence>
<comment type="function">
    <text evidence="1">Endonuclease that resolves Holliday junction intermediates in genetic recombination. Cleaves mobile four-strand junctions by introducing symmetrical nicks in paired strands. Promotes annealing of linear ssDNA with homologous dsDNA. Required for DNA repair, homologous recombination and chromosome segregation.</text>
</comment>
<comment type="catalytic activity">
    <reaction evidence="1">
        <text>Endonucleolytic cleavage at a junction such as a reciprocal single-stranded crossover between two homologous DNA duplexes (Holliday junction).</text>
        <dbReference type="EC" id="3.1.21.10"/>
    </reaction>
</comment>
<comment type="cofactor">
    <cofactor evidence="1">
        <name>Mg(2+)</name>
        <dbReference type="ChEBI" id="CHEBI:18420"/>
    </cofactor>
    <text evidence="1">Binds 1 Mg(2+) ion per subunit.</text>
</comment>
<comment type="subcellular location">
    <subcellularLocation>
        <location evidence="1">Cytoplasm</location>
    </subcellularLocation>
</comment>
<comment type="similarity">
    <text evidence="1">Belongs to the RecU family.</text>
</comment>
<reference key="1">
    <citation type="journal article" date="2009" name="BMC Genomics">
        <title>Genome evolution driven by host adaptations results in a more virulent and antimicrobial-resistant Streptococcus pneumoniae serotype 14.</title>
        <authorList>
            <person name="Ding F."/>
            <person name="Tang P."/>
            <person name="Hsu M.-H."/>
            <person name="Cui P."/>
            <person name="Hu S."/>
            <person name="Yu J."/>
            <person name="Chiu C.-H."/>
        </authorList>
    </citation>
    <scope>NUCLEOTIDE SEQUENCE [LARGE SCALE GENOMIC DNA]</scope>
    <source>
        <strain>CGSP14</strain>
    </source>
</reference>
<keyword id="KW-0963">Cytoplasm</keyword>
<keyword id="KW-0227">DNA damage</keyword>
<keyword id="KW-0233">DNA recombination</keyword>
<keyword id="KW-0234">DNA repair</keyword>
<keyword id="KW-0255">Endonuclease</keyword>
<keyword id="KW-0378">Hydrolase</keyword>
<keyword id="KW-0460">Magnesium</keyword>
<keyword id="KW-0479">Metal-binding</keyword>
<keyword id="KW-0540">Nuclease</keyword>
<gene>
    <name evidence="1" type="primary">recU</name>
    <name type="ordered locus">SPCG_0366</name>
</gene>